<sequence>MRVAQVVRNTSETQISVKIDLDGTGRQKLATGVPFLDHMLDQIARHGLVDLDIEAHGDTHIDDHHTVEDVGITLGQAVAKAVGDRKGIRRYGHSYVPLDEALSRVVIDFSGRPGLEFHVPFTRARIGTFDVDLSIEFFRGFVNHAGVTLHIDNLRGVNAHHQLETVFKAFGRALRMAVELDERAAGQIPSTKGSL</sequence>
<name>HIS7_BURPS</name>
<organism>
    <name type="scientific">Burkholderia pseudomallei (strain K96243)</name>
    <dbReference type="NCBI Taxonomy" id="272560"/>
    <lineage>
        <taxon>Bacteria</taxon>
        <taxon>Pseudomonadati</taxon>
        <taxon>Pseudomonadota</taxon>
        <taxon>Betaproteobacteria</taxon>
        <taxon>Burkholderiales</taxon>
        <taxon>Burkholderiaceae</taxon>
        <taxon>Burkholderia</taxon>
        <taxon>pseudomallei group</taxon>
    </lineage>
</organism>
<keyword id="KW-0028">Amino-acid biosynthesis</keyword>
<keyword id="KW-0963">Cytoplasm</keyword>
<keyword id="KW-0368">Histidine biosynthesis</keyword>
<keyword id="KW-0456">Lyase</keyword>
<keyword id="KW-1185">Reference proteome</keyword>
<evidence type="ECO:0000255" key="1">
    <source>
        <dbReference type="HAMAP-Rule" id="MF_00076"/>
    </source>
</evidence>
<comment type="catalytic activity">
    <reaction evidence="1">
        <text>D-erythro-1-(imidazol-4-yl)glycerol 3-phosphate = 3-(imidazol-4-yl)-2-oxopropyl phosphate + H2O</text>
        <dbReference type="Rhea" id="RHEA:11040"/>
        <dbReference type="ChEBI" id="CHEBI:15377"/>
        <dbReference type="ChEBI" id="CHEBI:57766"/>
        <dbReference type="ChEBI" id="CHEBI:58278"/>
        <dbReference type="EC" id="4.2.1.19"/>
    </reaction>
</comment>
<comment type="pathway">
    <text evidence="1">Amino-acid biosynthesis; L-histidine biosynthesis; L-histidine from 5-phospho-alpha-D-ribose 1-diphosphate: step 6/9.</text>
</comment>
<comment type="subcellular location">
    <subcellularLocation>
        <location evidence="1">Cytoplasm</location>
    </subcellularLocation>
</comment>
<comment type="similarity">
    <text evidence="1">Belongs to the imidazoleglycerol-phosphate dehydratase family.</text>
</comment>
<accession>Q63Q88</accession>
<feature type="chain" id="PRO_0000158120" description="Imidazoleglycerol-phosphate dehydratase">
    <location>
        <begin position="1"/>
        <end position="195"/>
    </location>
</feature>
<gene>
    <name evidence="1" type="primary">hisB</name>
    <name type="ordered locus">BPSL3137</name>
</gene>
<reference key="1">
    <citation type="journal article" date="2004" name="Proc. Natl. Acad. Sci. U.S.A.">
        <title>Genomic plasticity of the causative agent of melioidosis, Burkholderia pseudomallei.</title>
        <authorList>
            <person name="Holden M.T.G."/>
            <person name="Titball R.W."/>
            <person name="Peacock S.J."/>
            <person name="Cerdeno-Tarraga A.-M."/>
            <person name="Atkins T."/>
            <person name="Crossman L.C."/>
            <person name="Pitt T."/>
            <person name="Churcher C."/>
            <person name="Mungall K.L."/>
            <person name="Bentley S.D."/>
            <person name="Sebaihia M."/>
            <person name="Thomson N.R."/>
            <person name="Bason N."/>
            <person name="Beacham I.R."/>
            <person name="Brooks K."/>
            <person name="Brown K.A."/>
            <person name="Brown N.F."/>
            <person name="Challis G.L."/>
            <person name="Cherevach I."/>
            <person name="Chillingworth T."/>
            <person name="Cronin A."/>
            <person name="Crossett B."/>
            <person name="Davis P."/>
            <person name="DeShazer D."/>
            <person name="Feltwell T."/>
            <person name="Fraser A."/>
            <person name="Hance Z."/>
            <person name="Hauser H."/>
            <person name="Holroyd S."/>
            <person name="Jagels K."/>
            <person name="Keith K.E."/>
            <person name="Maddison M."/>
            <person name="Moule S."/>
            <person name="Price C."/>
            <person name="Quail M.A."/>
            <person name="Rabbinowitsch E."/>
            <person name="Rutherford K."/>
            <person name="Sanders M."/>
            <person name="Simmonds M."/>
            <person name="Songsivilai S."/>
            <person name="Stevens K."/>
            <person name="Tumapa S."/>
            <person name="Vesaratchavest M."/>
            <person name="Whitehead S."/>
            <person name="Yeats C."/>
            <person name="Barrell B.G."/>
            <person name="Oyston P.C.F."/>
            <person name="Parkhill J."/>
        </authorList>
    </citation>
    <scope>NUCLEOTIDE SEQUENCE [LARGE SCALE GENOMIC DNA]</scope>
    <source>
        <strain>K96243</strain>
    </source>
</reference>
<protein>
    <recommendedName>
        <fullName evidence="1">Imidazoleglycerol-phosphate dehydratase</fullName>
        <shortName evidence="1">IGPD</shortName>
        <ecNumber evidence="1">4.2.1.19</ecNumber>
    </recommendedName>
</protein>
<dbReference type="EC" id="4.2.1.19" evidence="1"/>
<dbReference type="EMBL" id="BX571965">
    <property type="protein sequence ID" value="CAH37147.1"/>
    <property type="molecule type" value="Genomic_DNA"/>
</dbReference>
<dbReference type="RefSeq" id="WP_004199911.1">
    <property type="nucleotide sequence ID" value="NZ_CP009538.1"/>
</dbReference>
<dbReference type="RefSeq" id="YP_109730.1">
    <property type="nucleotide sequence ID" value="NC_006350.1"/>
</dbReference>
<dbReference type="SMR" id="Q63Q88"/>
<dbReference type="STRING" id="272560.BPSL3137"/>
<dbReference type="GeneID" id="93061754"/>
<dbReference type="KEGG" id="bps:BPSL3137"/>
<dbReference type="PATRIC" id="fig|272560.51.peg.2106"/>
<dbReference type="eggNOG" id="COG0131">
    <property type="taxonomic scope" value="Bacteria"/>
</dbReference>
<dbReference type="UniPathway" id="UPA00031">
    <property type="reaction ID" value="UER00011"/>
</dbReference>
<dbReference type="Proteomes" id="UP000000605">
    <property type="component" value="Chromosome 1"/>
</dbReference>
<dbReference type="GO" id="GO:0005737">
    <property type="term" value="C:cytoplasm"/>
    <property type="evidence" value="ECO:0007669"/>
    <property type="project" value="UniProtKB-SubCell"/>
</dbReference>
<dbReference type="GO" id="GO:0004424">
    <property type="term" value="F:imidazoleglycerol-phosphate dehydratase activity"/>
    <property type="evidence" value="ECO:0007669"/>
    <property type="project" value="UniProtKB-UniRule"/>
</dbReference>
<dbReference type="GO" id="GO:0000105">
    <property type="term" value="P:L-histidine biosynthetic process"/>
    <property type="evidence" value="ECO:0007669"/>
    <property type="project" value="UniProtKB-UniRule"/>
</dbReference>
<dbReference type="CDD" id="cd07914">
    <property type="entry name" value="IGPD"/>
    <property type="match status" value="1"/>
</dbReference>
<dbReference type="FunFam" id="3.30.230.40:FF:000002">
    <property type="entry name" value="Imidazoleglycerol-phosphate dehydratase"/>
    <property type="match status" value="1"/>
</dbReference>
<dbReference type="FunFam" id="3.30.230.40:FF:000003">
    <property type="entry name" value="Imidazoleglycerol-phosphate dehydratase HisB"/>
    <property type="match status" value="1"/>
</dbReference>
<dbReference type="Gene3D" id="3.30.230.40">
    <property type="entry name" value="Imidazole glycerol phosphate dehydratase, domain 1"/>
    <property type="match status" value="2"/>
</dbReference>
<dbReference type="HAMAP" id="MF_00076">
    <property type="entry name" value="HisB"/>
    <property type="match status" value="1"/>
</dbReference>
<dbReference type="InterPro" id="IPR038494">
    <property type="entry name" value="IGPD_sf"/>
</dbReference>
<dbReference type="InterPro" id="IPR000807">
    <property type="entry name" value="ImidazoleglycerolP_deHydtase"/>
</dbReference>
<dbReference type="InterPro" id="IPR020565">
    <property type="entry name" value="ImidazoleglycerP_deHydtase_CS"/>
</dbReference>
<dbReference type="InterPro" id="IPR020568">
    <property type="entry name" value="Ribosomal_Su5_D2-typ_SF"/>
</dbReference>
<dbReference type="NCBIfam" id="NF002106">
    <property type="entry name" value="PRK00951.1-1"/>
    <property type="match status" value="1"/>
</dbReference>
<dbReference type="NCBIfam" id="NF002109">
    <property type="entry name" value="PRK00951.1-5"/>
    <property type="match status" value="1"/>
</dbReference>
<dbReference type="NCBIfam" id="NF002111">
    <property type="entry name" value="PRK00951.2-1"/>
    <property type="match status" value="1"/>
</dbReference>
<dbReference type="NCBIfam" id="NF002114">
    <property type="entry name" value="PRK00951.2-4"/>
    <property type="match status" value="1"/>
</dbReference>
<dbReference type="PANTHER" id="PTHR23133:SF2">
    <property type="entry name" value="IMIDAZOLEGLYCEROL-PHOSPHATE DEHYDRATASE"/>
    <property type="match status" value="1"/>
</dbReference>
<dbReference type="PANTHER" id="PTHR23133">
    <property type="entry name" value="IMIDAZOLEGLYCEROL-PHOSPHATE DEHYDRATASE HIS7"/>
    <property type="match status" value="1"/>
</dbReference>
<dbReference type="Pfam" id="PF00475">
    <property type="entry name" value="IGPD"/>
    <property type="match status" value="1"/>
</dbReference>
<dbReference type="SUPFAM" id="SSF54211">
    <property type="entry name" value="Ribosomal protein S5 domain 2-like"/>
    <property type="match status" value="2"/>
</dbReference>
<dbReference type="PROSITE" id="PS00954">
    <property type="entry name" value="IGP_DEHYDRATASE_1"/>
    <property type="match status" value="1"/>
</dbReference>
<dbReference type="PROSITE" id="PS00955">
    <property type="entry name" value="IGP_DEHYDRATASE_2"/>
    <property type="match status" value="1"/>
</dbReference>
<proteinExistence type="inferred from homology"/>